<organism>
    <name type="scientific">Leptodactylus pentadactylus</name>
    <name type="common">Smokey jungle frog</name>
    <name type="synonym">Rana pentadactyla</name>
    <dbReference type="NCBI Taxonomy" id="47564"/>
    <lineage>
        <taxon>Eukaryota</taxon>
        <taxon>Metazoa</taxon>
        <taxon>Chordata</taxon>
        <taxon>Craniata</taxon>
        <taxon>Vertebrata</taxon>
        <taxon>Euteleostomi</taxon>
        <taxon>Amphibia</taxon>
        <taxon>Batrachia</taxon>
        <taxon>Anura</taxon>
        <taxon>Neobatrachia</taxon>
        <taxon>Hyloidea</taxon>
        <taxon>Leptodactylidae</taxon>
        <taxon>Leptodactylinae</taxon>
        <taxon>Leptodactylus</taxon>
    </lineage>
</organism>
<name>OCE1_LEPPE</name>
<keyword id="KW-0027">Amidation</keyword>
<keyword id="KW-0878">Amphibian defense peptide</keyword>
<keyword id="KW-0044">Antibiotic</keyword>
<keyword id="KW-0929">Antimicrobial</keyword>
<keyword id="KW-0903">Direct protein sequencing</keyword>
<keyword id="KW-0964">Secreted</keyword>
<protein>
    <recommendedName>
        <fullName evidence="3">Ocellatin-P1</fullName>
    </recommendedName>
    <alternativeName>
        <fullName evidence="2">Pentadactylin</fullName>
    </alternativeName>
</protein>
<proteinExistence type="evidence at protein level"/>
<sequence>GLLDTLKGAAKNVVGSLASKVMEKL</sequence>
<dbReference type="SMR" id="P0DQJ7"/>
<dbReference type="GO" id="GO:0005576">
    <property type="term" value="C:extracellular region"/>
    <property type="evidence" value="ECO:0007669"/>
    <property type="project" value="UniProtKB-SubCell"/>
</dbReference>
<dbReference type="GO" id="GO:0042742">
    <property type="term" value="P:defense response to bacterium"/>
    <property type="evidence" value="ECO:0007669"/>
    <property type="project" value="UniProtKB-KW"/>
</dbReference>
<comment type="function">
    <text evidence="1">Antibacterial peptide that inhibits reference strains of both Gram-negative bacteria (E.coli, E.cloacae, K.pneumoniae, P.aeruginosa) and Gram-positive bacteria (S.aureus, S.epidermidis, E.faecalis, Streptococcus group B) with relatively low potencies (MIC=25-200 uM). The peptide shows very low hemolytic activity against human erythrocytes. Wheel projection demonstrates the amphipathicity of the alpha-helices is low which may explain the low antibacterial potency.</text>
</comment>
<comment type="subcellular location">
    <subcellularLocation>
        <location evidence="1">Secreted</location>
    </subcellularLocation>
</comment>
<comment type="tissue specificity">
    <text evidence="4">Expressed by the skin glands.</text>
</comment>
<comment type="mass spectrometry"/>
<comment type="similarity">
    <text evidence="3">Belongs to the frog skin active peptide (FSAP) family. Ocellatin subfamily.</text>
</comment>
<comment type="online information" name="The antimicrobial peptide database">
    <link uri="https://wangapd3.com/database/query_output.php?ID=00540"/>
</comment>
<reference key="1">
    <citation type="journal article" date="2005" name="Comp. Biochem. Physiol.">
        <title>Pentadactylin: an antimicrobial peptide from the skin secretions of the South American bullfrog Leptodactylus pentadactylus.</title>
        <authorList>
            <person name="King J.D."/>
            <person name="Al-Ghaferi N."/>
            <person name="Abraham B."/>
            <person name="Sonnevend A."/>
            <person name="Leprince J."/>
            <person name="Nielsen P.F."/>
            <person name="Conlon J.M."/>
        </authorList>
    </citation>
    <scope>PROTEIN SEQUENCE</scope>
    <scope>FUNCTION</scope>
    <scope>AMIDATION AT LEU-25</scope>
    <scope>MASS SPECTROMETRY</scope>
    <scope>SUBCELLULAR LOCATION</scope>
    <scope>SYNTHESIS</scope>
    <source>
        <tissue>Skin secretion</tissue>
    </source>
</reference>
<feature type="peptide" id="PRO_0000449459" description="Ocellatin-P1">
    <location>
        <begin position="1"/>
        <end position="25"/>
    </location>
</feature>
<feature type="modified residue" description="Leucine amide" evidence="1">
    <location>
        <position position="25"/>
    </location>
</feature>
<accession>P0DQJ7</accession>
<evidence type="ECO:0000269" key="1">
    <source>
    </source>
</evidence>
<evidence type="ECO:0000303" key="2">
    <source>
    </source>
</evidence>
<evidence type="ECO:0000305" key="3"/>
<evidence type="ECO:0000305" key="4">
    <source>
    </source>
</evidence>